<dbReference type="EC" id="4.2.1.139" evidence="4"/>
<dbReference type="EMBL" id="LC121822">
    <property type="protein sequence ID" value="BAX03553.1"/>
    <property type="molecule type" value="mRNA"/>
</dbReference>
<dbReference type="PDB" id="6OOC">
    <property type="method" value="X-ray"/>
    <property type="resolution" value="2.60 A"/>
    <property type="chains" value="A/B/C/D/E/F=1-188"/>
</dbReference>
<dbReference type="PDBsum" id="6OOC"/>
<dbReference type="SMR" id="A0A1V1FH01"/>
<dbReference type="GlyCosmos" id="A0A1V1FH01">
    <property type="glycosylation" value="1 site, No reported glycans"/>
</dbReference>
<dbReference type="SABIO-RK" id="A0A1V1FH01"/>
<dbReference type="GO" id="GO:0048046">
    <property type="term" value="C:apoplast"/>
    <property type="evidence" value="ECO:0007669"/>
    <property type="project" value="UniProtKB-SubCell"/>
</dbReference>
<dbReference type="GO" id="GO:0140859">
    <property type="term" value="F:pterocarpan synthase activity"/>
    <property type="evidence" value="ECO:0007669"/>
    <property type="project" value="UniProtKB-EC"/>
</dbReference>
<dbReference type="GO" id="GO:0006952">
    <property type="term" value="P:defense response"/>
    <property type="evidence" value="ECO:0007669"/>
    <property type="project" value="UniProtKB-KW"/>
</dbReference>
<dbReference type="GO" id="GO:0009699">
    <property type="term" value="P:phenylpropanoid biosynthetic process"/>
    <property type="evidence" value="ECO:0007669"/>
    <property type="project" value="UniProtKB-ARBA"/>
</dbReference>
<dbReference type="Gene3D" id="2.40.480.10">
    <property type="entry name" value="Allene oxide cyclase-like"/>
    <property type="match status" value="1"/>
</dbReference>
<dbReference type="InterPro" id="IPR044859">
    <property type="entry name" value="Allene_oxi_cyc_Dirigent"/>
</dbReference>
<dbReference type="InterPro" id="IPR004265">
    <property type="entry name" value="Dirigent"/>
</dbReference>
<dbReference type="PANTHER" id="PTHR21495">
    <property type="entry name" value="NUCLEOPORIN-RELATED"/>
    <property type="match status" value="1"/>
</dbReference>
<dbReference type="Pfam" id="PF03018">
    <property type="entry name" value="Dirigent"/>
    <property type="match status" value="1"/>
</dbReference>
<name>DIR_GLYEC</name>
<comment type="function">
    <text evidence="1 4">Involved in pterocarpan phytoalexin biosynthesis (PubMed:28394400). Catalyzes the last step in the biosynthesis of the phytoalexin medicarpin, and thereby contributes to plant defense reactions (PubMed:28394400). Dirigent proteins impart stereoselectivity on the phenoxy radical-coupling reaction, yielding optically active lignans from two molecules of coniferyl alcohol in the biosynthesis of lignans, flavonolignans, and alkaloids and thus plays a central role in plant secondary metabolism (By similarity).</text>
</comment>
<comment type="catalytic activity">
    <reaction evidence="4">
        <text>a (4R)-4,2'-dihydroxyisoflavan = a pterocarpan + H2O.</text>
        <dbReference type="EC" id="4.2.1.139"/>
    </reaction>
</comment>
<comment type="catalytic activity">
    <reaction evidence="4">
        <text>(3R,4R)-7,2'-dihydroxy-4'-methoxyisoflavanol = (-)-medicarpin + H2O</text>
        <dbReference type="Rhea" id="RHEA:35811"/>
        <dbReference type="ChEBI" id="CHEBI:100"/>
        <dbReference type="ChEBI" id="CHEBI:15377"/>
        <dbReference type="ChEBI" id="CHEBI:72646"/>
        <dbReference type="EC" id="4.2.1.139"/>
    </reaction>
    <physiologicalReaction direction="left-to-right" evidence="4">
        <dbReference type="Rhea" id="RHEA:35812"/>
    </physiologicalReaction>
</comment>
<comment type="catalytic activity">
    <reaction evidence="4">
        <text>(3S,4R)-7,2'-dihydroxy-4'-methoxyisoflavanol = (+)-medicarpin + H2O</text>
        <dbReference type="Rhea" id="RHEA:58920"/>
        <dbReference type="ChEBI" id="CHEBI:6714"/>
        <dbReference type="ChEBI" id="CHEBI:15377"/>
        <dbReference type="ChEBI" id="CHEBI:142866"/>
        <dbReference type="EC" id="4.2.1.139"/>
    </reaction>
    <physiologicalReaction direction="left-to-right" evidence="4">
        <dbReference type="Rhea" id="RHEA:58921"/>
    </physiologicalReaction>
</comment>
<comment type="catalytic activity">
    <reaction evidence="4">
        <text>(3R,4R)-3-(6-hydroxy-1,3-benzodioxol-5-yl)-3,4-dihydro-2H-chromene-4,7-diol = (-)-maackiain + H2O</text>
        <dbReference type="Rhea" id="RHEA:58924"/>
        <dbReference type="ChEBI" id="CHEBI:99"/>
        <dbReference type="ChEBI" id="CHEBI:15377"/>
        <dbReference type="ChEBI" id="CHEBI:142868"/>
        <dbReference type="EC" id="4.2.1.139"/>
    </reaction>
    <physiologicalReaction direction="left-to-right" evidence="4">
        <dbReference type="Rhea" id="RHEA:58925"/>
    </physiologicalReaction>
</comment>
<comment type="catalytic activity">
    <reaction evidence="4">
        <text>(3R,4R)-7,2',4'-trihydroxyisoflavanol = (6aR,11aR)-3,9-dihydroxypterocarpan + H2O</text>
        <dbReference type="Rhea" id="RHEA:58928"/>
        <dbReference type="ChEBI" id="CHEBI:15377"/>
        <dbReference type="ChEBI" id="CHEBI:15648"/>
        <dbReference type="ChEBI" id="CHEBI:142869"/>
        <dbReference type="EC" id="4.2.1.139"/>
    </reaction>
    <physiologicalReaction direction="left-to-right" evidence="4">
        <dbReference type="Rhea" id="RHEA:58929"/>
    </physiologicalReaction>
</comment>
<comment type="biophysicochemical properties">
    <kinetics>
        <KM evidence="4">200 uM for (3R,4R)-7,2'-dihydroxy-4'-methoxyisoflavanol</KM>
    </kinetics>
    <phDependence>
        <text evidence="4">Optimum pH is 6.5-7.5.</text>
    </phDependence>
</comment>
<comment type="subunit">
    <text evidence="1">Homodimer.</text>
</comment>
<comment type="subcellular location">
    <subcellularLocation>
        <location evidence="6">Secreted</location>
        <location evidence="6">Extracellular space</location>
        <location evidence="6">Apoplast</location>
    </subcellularLocation>
</comment>
<comment type="similarity">
    <text evidence="1">Belongs to the plant dirigent protein family.</text>
</comment>
<proteinExistence type="evidence at protein level"/>
<feature type="signal peptide" evidence="2">
    <location>
        <begin position="1"/>
        <end position="23"/>
    </location>
</feature>
<feature type="chain" id="PRO_5010603000" description="Pterocarpan synthase 1">
    <location>
        <begin position="24"/>
        <end position="188"/>
    </location>
</feature>
<feature type="glycosylation site" description="N-linked (GlcNAc...) asparagine" evidence="3">
    <location>
        <position position="127"/>
    </location>
</feature>
<feature type="strand" evidence="7">
    <location>
        <begin position="25"/>
        <end position="29"/>
    </location>
</feature>
<feature type="strand" evidence="7">
    <location>
        <begin position="33"/>
        <end position="35"/>
    </location>
</feature>
<feature type="strand" evidence="7">
    <location>
        <begin position="37"/>
        <end position="50"/>
    </location>
</feature>
<feature type="strand" evidence="7">
    <location>
        <begin position="53"/>
        <end position="56"/>
    </location>
</feature>
<feature type="strand" evidence="7">
    <location>
        <begin position="58"/>
        <end position="63"/>
    </location>
</feature>
<feature type="strand" evidence="7">
    <location>
        <begin position="78"/>
        <end position="90"/>
    </location>
</feature>
<feature type="strand" evidence="7">
    <location>
        <begin position="95"/>
        <end position="105"/>
    </location>
</feature>
<feature type="strand" evidence="7">
    <location>
        <begin position="108"/>
        <end position="110"/>
    </location>
</feature>
<feature type="strand" evidence="7">
    <location>
        <begin position="113"/>
        <end position="121"/>
    </location>
</feature>
<feature type="helix" evidence="7">
    <location>
        <begin position="124"/>
        <end position="126"/>
    </location>
</feature>
<feature type="strand" evidence="7">
    <location>
        <begin position="130"/>
        <end position="137"/>
    </location>
</feature>
<feature type="turn" evidence="7">
    <location>
        <begin position="139"/>
        <end position="141"/>
    </location>
</feature>
<feature type="strand" evidence="7">
    <location>
        <begin position="143"/>
        <end position="153"/>
    </location>
</feature>
<feature type="helix" evidence="7">
    <location>
        <begin position="154"/>
        <end position="156"/>
    </location>
</feature>
<feature type="strand" evidence="7">
    <location>
        <begin position="160"/>
        <end position="170"/>
    </location>
</feature>
<feature type="turn" evidence="7">
    <location>
        <begin position="172"/>
        <end position="174"/>
    </location>
</feature>
<feature type="strand" evidence="7">
    <location>
        <begin position="177"/>
        <end position="188"/>
    </location>
</feature>
<protein>
    <recommendedName>
        <fullName evidence="5">Pterocarpan synthase 1</fullName>
        <shortName evidence="5">GePTS1</shortName>
        <ecNumber evidence="4">4.2.1.139</ecNumber>
    </recommendedName>
    <alternativeName>
        <fullName evidence="6">Dirigent protein</fullName>
    </alternativeName>
</protein>
<keyword id="KW-0002">3D-structure</keyword>
<keyword id="KW-0052">Apoplast</keyword>
<keyword id="KW-0325">Glycoprotein</keyword>
<keyword id="KW-0456">Lyase</keyword>
<keyword id="KW-0611">Plant defense</keyword>
<keyword id="KW-0964">Secreted</keyword>
<keyword id="KW-0732">Signal</keyword>
<reference key="1">
    <citation type="journal article" date="2017" name="Plant Cell Physiol.">
        <title>The missing link in leguminous pterocarpan biosynthesis is a dirigent domain-containing protein with isoflavanol dehydratase activity.</title>
        <authorList>
            <person name="Uchida K."/>
            <person name="Akashi T."/>
            <person name="Aoki T."/>
        </authorList>
    </citation>
    <scope>NUCLEOTIDE SEQUENCE [MRNA]</scope>
    <scope>FUNCTION</scope>
    <scope>CATALYTIC ACTIVITY</scope>
</reference>
<accession>A0A1V1FH01</accession>
<gene>
    <name evidence="5" type="primary">PTS1</name>
</gene>
<evidence type="ECO:0000250" key="1">
    <source>
        <dbReference type="UniProtKB" id="Q9SUQ8"/>
    </source>
</evidence>
<evidence type="ECO:0000255" key="2"/>
<evidence type="ECO:0000255" key="3">
    <source>
        <dbReference type="PROSITE-ProRule" id="PRU00498"/>
    </source>
</evidence>
<evidence type="ECO:0000269" key="4">
    <source>
    </source>
</evidence>
<evidence type="ECO:0000303" key="5">
    <source>
    </source>
</evidence>
<evidence type="ECO:0000305" key="6"/>
<evidence type="ECO:0007829" key="7">
    <source>
        <dbReference type="PDB" id="6OOC"/>
    </source>
</evidence>
<organism>
    <name type="scientific">Glycyrrhiza echinata</name>
    <name type="common">Licorice</name>
    <dbReference type="NCBI Taxonomy" id="46348"/>
    <lineage>
        <taxon>Eukaryota</taxon>
        <taxon>Viridiplantae</taxon>
        <taxon>Streptophyta</taxon>
        <taxon>Embryophyta</taxon>
        <taxon>Tracheophyta</taxon>
        <taxon>Spermatophyta</taxon>
        <taxon>Magnoliopsida</taxon>
        <taxon>eudicotyledons</taxon>
        <taxon>Gunneridae</taxon>
        <taxon>Pentapetalae</taxon>
        <taxon>rosids</taxon>
        <taxon>fabids</taxon>
        <taxon>Fabales</taxon>
        <taxon>Fabaceae</taxon>
        <taxon>Papilionoideae</taxon>
        <taxon>50 kb inversion clade</taxon>
        <taxon>NPAAA clade</taxon>
        <taxon>Hologalegina</taxon>
        <taxon>IRL clade</taxon>
        <taxon>Galegeae</taxon>
        <taxon>Glycyrrhiza</taxon>
    </lineage>
</organism>
<sequence>MAKSTTFFISLTLPFLLLSVVTATYYQSMSPTVLGFQEEKFTHLHFYFHDVVTGPKPSMVIVAEPNGKAKNSLPFGTVVAMDDPLTVGPESDSKLVGKAQGIYTSISQEEMGLMMVMTMAFSDGEFNGSTLSILARNMIMSEPVREMAIVGGTGAFRFARGYAQAKFYSVDFTKGDAIVEYDIFVFHY</sequence>